<sequence>MQLGEQLLVSSVNLPGAHFYPLESARGGSGGSAGHLPSAAPSPQKLDLDKASKKFSGSLSCEAVSGEPAAASAGAPAAMLSDTDAGDAFASAAAVAKPGPPDGRKGSPCGEEELPSAAAAAAAAAAAAAATARYSMDSLSSERYYLQSPGPQGSELAAPCSLFPYQAAAGAPHGPVYPAPNGARYPYGSMLPPGGFPAAVCPPGRAQFGPGAGAGSGAGGSSGGGGGPGTYQYSQGAPLYGPYPGAAAAGSCGGLGGLGVPGSGFRAHVYLCNRPLWLKFHRHQTEMIITKQGRRMFPFLSFNINGLNPTAHYNVFVEVVLADPNHWRFQGGKWVTCGKADNNMQGNKMYVHPESPNTGSHWMRQEISFGKLKLTNNKGANNNNTQMIVLQSLHKYQPRLHIVEVTEDGVEDLNEPSKTQTFTFSETQFIAVTAYQNTDITQLKIDHNPFAKGFRDNYDSSHQIVPGGRYGVQSFFPEPFVNTLPQARYYNGERTVPQTNGLLSPQQSEEVANPPQRWLVTPVQQPGTNKLDISSYESEYTSSTLLPYGIKSLPLQTSHALGYYPDPTFPAMAGWGGRGSYQRKMAAGLPWTSRTSPTVFSEDQLSKEKVKEEIGSSWIETPPSIKSLDSNDSGVYTSACKRRRLSPSNSSNENSPSIKCEDINAEEYSKDTSKGMGGYYAFYTTP</sequence>
<accession>O95936</accession>
<accession>B7Z4I2</accession>
<accession>B7ZA51</accession>
<accession>G3XAI5</accession>
<accession>Q8TAZ2</accession>
<accession>Q9UPM7</accession>
<dbReference type="EMBL" id="AB031038">
    <property type="protein sequence ID" value="BAA83417.1"/>
    <property type="molecule type" value="mRNA"/>
</dbReference>
<dbReference type="EMBL" id="AK297389">
    <property type="protein sequence ID" value="BAH12568.1"/>
    <property type="molecule type" value="mRNA"/>
</dbReference>
<dbReference type="EMBL" id="AK316166">
    <property type="protein sequence ID" value="BAH14537.1"/>
    <property type="molecule type" value="mRNA"/>
</dbReference>
<dbReference type="EMBL" id="AB463608">
    <property type="status" value="NOT_ANNOTATED_CDS"/>
    <property type="molecule type" value="mRNA"/>
</dbReference>
<dbReference type="EMBL" id="AC098614">
    <property type="status" value="NOT_ANNOTATED_CDS"/>
    <property type="molecule type" value="Genomic_DNA"/>
</dbReference>
<dbReference type="EMBL" id="CH471055">
    <property type="protein sequence ID" value="EAW64388.1"/>
    <property type="molecule type" value="Genomic_DNA"/>
</dbReference>
<dbReference type="EMBL" id="AJ010280">
    <property type="protein sequence ID" value="CAB37939.1"/>
    <property type="molecule type" value="Genomic_DNA"/>
</dbReference>
<dbReference type="EMBL" id="BC025363">
    <property type="protein sequence ID" value="AAH25363.1"/>
    <property type="molecule type" value="mRNA"/>
</dbReference>
<dbReference type="CCDS" id="CCDS2646.1">
    <molecule id="O95936-1"/>
</dbReference>
<dbReference type="CCDS" id="CCDS63584.1">
    <molecule id="O95936-3"/>
</dbReference>
<dbReference type="CCDS" id="CCDS63585.1">
    <molecule id="O95936-4"/>
</dbReference>
<dbReference type="RefSeq" id="NP_001265111.1">
    <molecule id="O95936-4"/>
    <property type="nucleotide sequence ID" value="NM_001278182.2"/>
</dbReference>
<dbReference type="RefSeq" id="NP_001265112.1">
    <molecule id="O95936-3"/>
    <property type="nucleotide sequence ID" value="NM_001278183.2"/>
</dbReference>
<dbReference type="RefSeq" id="NP_005433.2">
    <molecule id="O95936-1"/>
    <property type="nucleotide sequence ID" value="NM_005442.3"/>
</dbReference>
<dbReference type="SMR" id="O95936"/>
<dbReference type="BioGRID" id="113916">
    <property type="interactions" value="2"/>
</dbReference>
<dbReference type="FunCoup" id="O95936">
    <property type="interactions" value="21"/>
</dbReference>
<dbReference type="IntAct" id="O95936">
    <property type="interactions" value="4"/>
</dbReference>
<dbReference type="MINT" id="O95936"/>
<dbReference type="STRING" id="9606.ENSP00000388620"/>
<dbReference type="GlyGen" id="O95936">
    <property type="glycosylation" value="1 site, 1 N-linked glycan (1 site)"/>
</dbReference>
<dbReference type="iPTMnet" id="O95936"/>
<dbReference type="PhosphoSitePlus" id="O95936"/>
<dbReference type="BioMuta" id="EOMES"/>
<dbReference type="jPOST" id="O95936"/>
<dbReference type="MassIVE" id="O95936"/>
<dbReference type="PaxDb" id="9606-ENSP00000388620"/>
<dbReference type="PeptideAtlas" id="O95936"/>
<dbReference type="ProteomicsDB" id="33758"/>
<dbReference type="ProteomicsDB" id="51135">
    <molecule id="O95936-1"/>
</dbReference>
<dbReference type="ProteomicsDB" id="51136">
    <molecule id="O95936-2"/>
</dbReference>
<dbReference type="ProteomicsDB" id="7055"/>
<dbReference type="Antibodypedia" id="11523">
    <property type="antibodies" value="448 antibodies from 40 providers"/>
</dbReference>
<dbReference type="DNASU" id="8320"/>
<dbReference type="Ensembl" id="ENST00000295743.8">
    <molecule id="O95936-1"/>
    <property type="protein sequence ID" value="ENSP00000295743.4"/>
    <property type="gene ID" value="ENSG00000163508.13"/>
</dbReference>
<dbReference type="Ensembl" id="ENST00000449599.4">
    <molecule id="O95936-4"/>
    <property type="protein sequence ID" value="ENSP00000388620.1"/>
    <property type="gene ID" value="ENSG00000163508.13"/>
</dbReference>
<dbReference type="Ensembl" id="ENST00000461503.2">
    <molecule id="O95936-3"/>
    <property type="protein sequence ID" value="ENSP00000487112.1"/>
    <property type="gene ID" value="ENSG00000163508.13"/>
</dbReference>
<dbReference type="GeneID" id="8320"/>
<dbReference type="KEGG" id="hsa:8320"/>
<dbReference type="MANE-Select" id="ENST00000449599.4">
    <molecule id="O95936-4"/>
    <property type="protein sequence ID" value="ENSP00000388620.1"/>
    <property type="RefSeq nucleotide sequence ID" value="NM_001278182.2"/>
    <property type="RefSeq protein sequence ID" value="NP_001265111.1"/>
</dbReference>
<dbReference type="UCSC" id="uc003cdx.5">
    <molecule id="O95936-1"/>
    <property type="organism name" value="human"/>
</dbReference>
<dbReference type="AGR" id="HGNC:3372"/>
<dbReference type="CTD" id="8320"/>
<dbReference type="DisGeNET" id="8320"/>
<dbReference type="GeneCards" id="EOMES"/>
<dbReference type="HGNC" id="HGNC:3372">
    <property type="gene designation" value="EOMES"/>
</dbReference>
<dbReference type="HPA" id="ENSG00000163508">
    <property type="expression patterns" value="Group enriched (brain, lymphoid tissue)"/>
</dbReference>
<dbReference type="MalaCards" id="EOMES"/>
<dbReference type="MIM" id="604615">
    <property type="type" value="gene"/>
</dbReference>
<dbReference type="neXtProt" id="NX_O95936"/>
<dbReference type="OpenTargets" id="ENSG00000163508"/>
<dbReference type="Orphanet" id="171703">
    <property type="disease" value="Microcephaly-polymicrogyria-corpus callosum agenesis syndrome"/>
</dbReference>
<dbReference type="PharmGKB" id="PA27806"/>
<dbReference type="VEuPathDB" id="HostDB:ENSG00000163508"/>
<dbReference type="eggNOG" id="KOG3585">
    <property type="taxonomic scope" value="Eukaryota"/>
</dbReference>
<dbReference type="GeneTree" id="ENSGT00940000158728"/>
<dbReference type="HOGENOM" id="CLU_014430_8_1_1"/>
<dbReference type="InParanoid" id="O95936"/>
<dbReference type="OMA" id="LYNPYPP"/>
<dbReference type="OrthoDB" id="7442607at2759"/>
<dbReference type="PAN-GO" id="O95936">
    <property type="GO annotations" value="6 GO annotations based on evolutionary models"/>
</dbReference>
<dbReference type="PhylomeDB" id="O95936"/>
<dbReference type="TreeFam" id="TF106341"/>
<dbReference type="PathwayCommons" id="O95936"/>
<dbReference type="Reactome" id="R-HSA-9733709">
    <property type="pathway name" value="Cardiogenesis"/>
</dbReference>
<dbReference type="Reactome" id="R-HSA-9754189">
    <property type="pathway name" value="Germ layer formation at gastrulation"/>
</dbReference>
<dbReference type="Reactome" id="R-HSA-9758919">
    <property type="pathway name" value="Epithelial-Mesenchymal Transition (EMT) during gastrulation"/>
</dbReference>
<dbReference type="Reactome" id="R-HSA-9823730">
    <property type="pathway name" value="Formation of definitive endoderm"/>
</dbReference>
<dbReference type="Reactome" id="R-HSA-9827857">
    <property type="pathway name" value="Specification of primordial germ cells"/>
</dbReference>
<dbReference type="SignaLink" id="O95936"/>
<dbReference type="SIGNOR" id="O95936"/>
<dbReference type="BioGRID-ORCS" id="8320">
    <property type="hits" value="19 hits in 1175 CRISPR screens"/>
</dbReference>
<dbReference type="GeneWiki" id="Eomesodermin"/>
<dbReference type="GenomeRNAi" id="8320"/>
<dbReference type="Pharos" id="O95936">
    <property type="development level" value="Tbio"/>
</dbReference>
<dbReference type="PRO" id="PR:O95936"/>
<dbReference type="Proteomes" id="UP000005640">
    <property type="component" value="Chromosome 3"/>
</dbReference>
<dbReference type="RNAct" id="O95936">
    <property type="molecule type" value="protein"/>
</dbReference>
<dbReference type="Bgee" id="ENSG00000163508">
    <property type="expression patterns" value="Expressed in ganglionic eminence and 124 other cell types or tissues"/>
</dbReference>
<dbReference type="GO" id="GO:0000785">
    <property type="term" value="C:chromatin"/>
    <property type="evidence" value="ECO:0000318"/>
    <property type="project" value="GO_Central"/>
</dbReference>
<dbReference type="GO" id="GO:0005654">
    <property type="term" value="C:nucleoplasm"/>
    <property type="evidence" value="ECO:0000304"/>
    <property type="project" value="Reactome"/>
</dbReference>
<dbReference type="GO" id="GO:0005634">
    <property type="term" value="C:nucleus"/>
    <property type="evidence" value="ECO:0000318"/>
    <property type="project" value="GO_Central"/>
</dbReference>
<dbReference type="GO" id="GO:0031490">
    <property type="term" value="F:chromatin DNA binding"/>
    <property type="evidence" value="ECO:0007669"/>
    <property type="project" value="Ensembl"/>
</dbReference>
<dbReference type="GO" id="GO:0003677">
    <property type="term" value="F:DNA binding"/>
    <property type="evidence" value="ECO:0000250"/>
    <property type="project" value="UniProtKB"/>
</dbReference>
<dbReference type="GO" id="GO:0000981">
    <property type="term" value="F:DNA-binding transcription factor activity, RNA polymerase II-specific"/>
    <property type="evidence" value="ECO:0000318"/>
    <property type="project" value="GO_Central"/>
</dbReference>
<dbReference type="GO" id="GO:0000978">
    <property type="term" value="F:RNA polymerase II cis-regulatory region sequence-specific DNA binding"/>
    <property type="evidence" value="ECO:0000318"/>
    <property type="project" value="GO_Central"/>
</dbReference>
<dbReference type="GO" id="GO:0061629">
    <property type="term" value="F:RNA polymerase II-specific DNA-binding transcription factor binding"/>
    <property type="evidence" value="ECO:0000250"/>
    <property type="project" value="BHF-UCL"/>
</dbReference>
<dbReference type="GO" id="GO:0043565">
    <property type="term" value="F:sequence-specific DNA binding"/>
    <property type="evidence" value="ECO:0000314"/>
    <property type="project" value="MGI"/>
</dbReference>
<dbReference type="GO" id="GO:1990837">
    <property type="term" value="F:sequence-specific double-stranded DNA binding"/>
    <property type="evidence" value="ECO:0000314"/>
    <property type="project" value="ARUK-UCL"/>
</dbReference>
<dbReference type="GO" id="GO:0003714">
    <property type="term" value="F:transcription corepressor activity"/>
    <property type="evidence" value="ECO:0000250"/>
    <property type="project" value="BHF-UCL"/>
</dbReference>
<dbReference type="GO" id="GO:0002250">
    <property type="term" value="P:adaptive immune response"/>
    <property type="evidence" value="ECO:0007669"/>
    <property type="project" value="UniProtKB-KW"/>
</dbReference>
<dbReference type="GO" id="GO:0048708">
    <property type="term" value="P:astrocyte differentiation"/>
    <property type="evidence" value="ECO:0007669"/>
    <property type="project" value="Ensembl"/>
</dbReference>
<dbReference type="GO" id="GO:0007420">
    <property type="term" value="P:brain development"/>
    <property type="evidence" value="ECO:0000315"/>
    <property type="project" value="UniProtKB"/>
</dbReference>
<dbReference type="GO" id="GO:0010002">
    <property type="term" value="P:cardioblast differentiation"/>
    <property type="evidence" value="ECO:0007669"/>
    <property type="project" value="Ensembl"/>
</dbReference>
<dbReference type="GO" id="GO:0002302">
    <property type="term" value="P:CD8-positive, alpha-beta T cell differentiation involved in immune response"/>
    <property type="evidence" value="ECO:0000315"/>
    <property type="project" value="UniProtKB"/>
</dbReference>
<dbReference type="GO" id="GO:0060706">
    <property type="term" value="P:cell differentiation involved in embryonic placenta development"/>
    <property type="evidence" value="ECO:0000250"/>
    <property type="project" value="UniProtKB"/>
</dbReference>
<dbReference type="GO" id="GO:0021895">
    <property type="term" value="P:cerebral cortex neuron differentiation"/>
    <property type="evidence" value="ECO:0007669"/>
    <property type="project" value="Ensembl"/>
</dbReference>
<dbReference type="GO" id="GO:0021796">
    <property type="term" value="P:cerebral cortex regionalization"/>
    <property type="evidence" value="ECO:0007669"/>
    <property type="project" value="Ensembl"/>
</dbReference>
<dbReference type="GO" id="GO:0006338">
    <property type="term" value="P:chromatin remodeling"/>
    <property type="evidence" value="ECO:0007669"/>
    <property type="project" value="Ensembl"/>
</dbReference>
<dbReference type="GO" id="GO:0001706">
    <property type="term" value="P:endoderm formation"/>
    <property type="evidence" value="ECO:0000250"/>
    <property type="project" value="UniProtKB"/>
</dbReference>
<dbReference type="GO" id="GO:0001714">
    <property type="term" value="P:endodermal cell fate specification"/>
    <property type="evidence" value="ECO:0000318"/>
    <property type="project" value="GO_Central"/>
</dbReference>
<dbReference type="GO" id="GO:0010467">
    <property type="term" value="P:gene expression"/>
    <property type="evidence" value="ECO:0007669"/>
    <property type="project" value="Ensembl"/>
</dbReference>
<dbReference type="GO" id="GO:0048382">
    <property type="term" value="P:mesendoderm development"/>
    <property type="evidence" value="ECO:0007669"/>
    <property type="project" value="Ensembl"/>
</dbReference>
<dbReference type="GO" id="GO:0001707">
    <property type="term" value="P:mesoderm formation"/>
    <property type="evidence" value="ECO:0000250"/>
    <property type="project" value="UniProtKB"/>
</dbReference>
<dbReference type="GO" id="GO:0060809">
    <property type="term" value="P:mesodermal to mesenchymal transition involved in gastrulation"/>
    <property type="evidence" value="ECO:0000250"/>
    <property type="project" value="UniProtKB"/>
</dbReference>
<dbReference type="GO" id="GO:0000122">
    <property type="term" value="P:negative regulation of transcription by RNA polymerase II"/>
    <property type="evidence" value="ECO:0000250"/>
    <property type="project" value="BHF-UCL"/>
</dbReference>
<dbReference type="GO" id="GO:0001764">
    <property type="term" value="P:neuron migration"/>
    <property type="evidence" value="ECO:0007669"/>
    <property type="project" value="Ensembl"/>
</dbReference>
<dbReference type="GO" id="GO:0021772">
    <property type="term" value="P:olfactory bulb development"/>
    <property type="evidence" value="ECO:0007669"/>
    <property type="project" value="Ensembl"/>
</dbReference>
<dbReference type="GO" id="GO:0045893">
    <property type="term" value="P:positive regulation of DNA-templated transcription"/>
    <property type="evidence" value="ECO:0000250"/>
    <property type="project" value="UniProtKB"/>
</dbReference>
<dbReference type="GO" id="GO:0045944">
    <property type="term" value="P:positive regulation of transcription by RNA polymerase II"/>
    <property type="evidence" value="ECO:0000314"/>
    <property type="project" value="MGI"/>
</dbReference>
<dbReference type="GO" id="GO:0006357">
    <property type="term" value="P:regulation of transcription by RNA polymerase II"/>
    <property type="evidence" value="ECO:0000318"/>
    <property type="project" value="GO_Central"/>
</dbReference>
<dbReference type="GO" id="GO:0035914">
    <property type="term" value="P:skeletal muscle cell differentiation"/>
    <property type="evidence" value="ECO:0007669"/>
    <property type="project" value="Ensembl"/>
</dbReference>
<dbReference type="GO" id="GO:0019827">
    <property type="term" value="P:stem cell population maintenance"/>
    <property type="evidence" value="ECO:0007669"/>
    <property type="project" value="Ensembl"/>
</dbReference>
<dbReference type="GO" id="GO:0001829">
    <property type="term" value="P:trophectodermal cell differentiation"/>
    <property type="evidence" value="ECO:0007669"/>
    <property type="project" value="Ensembl"/>
</dbReference>
<dbReference type="CDD" id="cd20205">
    <property type="entry name" value="T-box_TBR2"/>
    <property type="match status" value="1"/>
</dbReference>
<dbReference type="FunFam" id="2.60.40.820:FF:000004">
    <property type="entry name" value="T-box, brain 1"/>
    <property type="match status" value="1"/>
</dbReference>
<dbReference type="Gene3D" id="2.60.40.820">
    <property type="entry name" value="Transcription factor, T-box"/>
    <property type="match status" value="1"/>
</dbReference>
<dbReference type="InterPro" id="IPR008967">
    <property type="entry name" value="p53-like_TF_DNA-bd_sf"/>
</dbReference>
<dbReference type="InterPro" id="IPR032385">
    <property type="entry name" value="T-box_assoc"/>
</dbReference>
<dbReference type="InterPro" id="IPR046360">
    <property type="entry name" value="T-box_DNA-bd"/>
</dbReference>
<dbReference type="InterPro" id="IPR036960">
    <property type="entry name" value="T-box_sf"/>
</dbReference>
<dbReference type="InterPro" id="IPR001699">
    <property type="entry name" value="TF_T-box"/>
</dbReference>
<dbReference type="InterPro" id="IPR018186">
    <property type="entry name" value="TF_T-box_CS"/>
</dbReference>
<dbReference type="PANTHER" id="PTHR11267:SF13">
    <property type="entry name" value="EOMESODERMIN HOMOLOG"/>
    <property type="match status" value="1"/>
</dbReference>
<dbReference type="PANTHER" id="PTHR11267">
    <property type="entry name" value="T-BOX PROTEIN-RELATED"/>
    <property type="match status" value="1"/>
</dbReference>
<dbReference type="Pfam" id="PF00907">
    <property type="entry name" value="T-box"/>
    <property type="match status" value="1"/>
</dbReference>
<dbReference type="Pfam" id="PF16176">
    <property type="entry name" value="T-box_assoc"/>
    <property type="match status" value="1"/>
</dbReference>
<dbReference type="PRINTS" id="PR00937">
    <property type="entry name" value="TBOX"/>
</dbReference>
<dbReference type="SMART" id="SM00425">
    <property type="entry name" value="TBOX"/>
    <property type="match status" value="1"/>
</dbReference>
<dbReference type="SUPFAM" id="SSF49417">
    <property type="entry name" value="p53-like transcription factors"/>
    <property type="match status" value="1"/>
</dbReference>
<dbReference type="PROSITE" id="PS01283">
    <property type="entry name" value="TBOX_1"/>
    <property type="match status" value="1"/>
</dbReference>
<dbReference type="PROSITE" id="PS01264">
    <property type="entry name" value="TBOX_2"/>
    <property type="match status" value="1"/>
</dbReference>
<dbReference type="PROSITE" id="PS50252">
    <property type="entry name" value="TBOX_3"/>
    <property type="match status" value="1"/>
</dbReference>
<name>EOMES_HUMAN</name>
<reference key="1">
    <citation type="journal article" date="1999" name="Brain Res. Dev. Brain Res.">
        <title>A novel mammalian T-box-containing gene, Tbr2, expressed in mouse developing brain.</title>
        <authorList>
            <person name="Kimura N."/>
            <person name="Nakashima K."/>
            <person name="Ueno M."/>
            <person name="Taga T."/>
        </authorList>
    </citation>
    <scope>NUCLEOTIDE SEQUENCE [MRNA] (ISOFORM 1)</scope>
</reference>
<reference key="2">
    <citation type="journal article" date="2004" name="Nat. Genet.">
        <title>Complete sequencing and characterization of 21,243 full-length human cDNAs.</title>
        <authorList>
            <person name="Ota T."/>
            <person name="Suzuki Y."/>
            <person name="Nishikawa T."/>
            <person name="Otsuki T."/>
            <person name="Sugiyama T."/>
            <person name="Irie R."/>
            <person name="Wakamatsu A."/>
            <person name="Hayashi K."/>
            <person name="Sato H."/>
            <person name="Nagai K."/>
            <person name="Kimura K."/>
            <person name="Makita H."/>
            <person name="Sekine M."/>
            <person name="Obayashi M."/>
            <person name="Nishi T."/>
            <person name="Shibahara T."/>
            <person name="Tanaka T."/>
            <person name="Ishii S."/>
            <person name="Yamamoto J."/>
            <person name="Saito K."/>
            <person name="Kawai Y."/>
            <person name="Isono Y."/>
            <person name="Nakamura Y."/>
            <person name="Nagahari K."/>
            <person name="Murakami K."/>
            <person name="Yasuda T."/>
            <person name="Iwayanagi T."/>
            <person name="Wagatsuma M."/>
            <person name="Shiratori A."/>
            <person name="Sudo H."/>
            <person name="Hosoiri T."/>
            <person name="Kaku Y."/>
            <person name="Kodaira H."/>
            <person name="Kondo H."/>
            <person name="Sugawara M."/>
            <person name="Takahashi M."/>
            <person name="Kanda K."/>
            <person name="Yokoi T."/>
            <person name="Furuya T."/>
            <person name="Kikkawa E."/>
            <person name="Omura Y."/>
            <person name="Abe K."/>
            <person name="Kamihara K."/>
            <person name="Katsuta N."/>
            <person name="Sato K."/>
            <person name="Tanikawa M."/>
            <person name="Yamazaki M."/>
            <person name="Ninomiya K."/>
            <person name="Ishibashi T."/>
            <person name="Yamashita H."/>
            <person name="Murakawa K."/>
            <person name="Fujimori K."/>
            <person name="Tanai H."/>
            <person name="Kimata M."/>
            <person name="Watanabe M."/>
            <person name="Hiraoka S."/>
            <person name="Chiba Y."/>
            <person name="Ishida S."/>
            <person name="Ono Y."/>
            <person name="Takiguchi S."/>
            <person name="Watanabe S."/>
            <person name="Yosida M."/>
            <person name="Hotuta T."/>
            <person name="Kusano J."/>
            <person name="Kanehori K."/>
            <person name="Takahashi-Fujii A."/>
            <person name="Hara H."/>
            <person name="Tanase T.-O."/>
            <person name="Nomura Y."/>
            <person name="Togiya S."/>
            <person name="Komai F."/>
            <person name="Hara R."/>
            <person name="Takeuchi K."/>
            <person name="Arita M."/>
            <person name="Imose N."/>
            <person name="Musashino K."/>
            <person name="Yuuki H."/>
            <person name="Oshima A."/>
            <person name="Sasaki N."/>
            <person name="Aotsuka S."/>
            <person name="Yoshikawa Y."/>
            <person name="Matsunawa H."/>
            <person name="Ichihara T."/>
            <person name="Shiohata N."/>
            <person name="Sano S."/>
            <person name="Moriya S."/>
            <person name="Momiyama H."/>
            <person name="Satoh N."/>
            <person name="Takami S."/>
            <person name="Terashima Y."/>
            <person name="Suzuki O."/>
            <person name="Nakagawa S."/>
            <person name="Senoh A."/>
            <person name="Mizoguchi H."/>
            <person name="Goto Y."/>
            <person name="Shimizu F."/>
            <person name="Wakebe H."/>
            <person name="Hishigaki H."/>
            <person name="Watanabe T."/>
            <person name="Sugiyama A."/>
            <person name="Takemoto M."/>
            <person name="Kawakami B."/>
            <person name="Yamazaki M."/>
            <person name="Watanabe K."/>
            <person name="Kumagai A."/>
            <person name="Itakura S."/>
            <person name="Fukuzumi Y."/>
            <person name="Fujimori Y."/>
            <person name="Komiyama M."/>
            <person name="Tashiro H."/>
            <person name="Tanigami A."/>
            <person name="Fujiwara T."/>
            <person name="Ono T."/>
            <person name="Yamada K."/>
            <person name="Fujii Y."/>
            <person name="Ozaki K."/>
            <person name="Hirao M."/>
            <person name="Ohmori Y."/>
            <person name="Kawabata A."/>
            <person name="Hikiji T."/>
            <person name="Kobatake N."/>
            <person name="Inagaki H."/>
            <person name="Ikema Y."/>
            <person name="Okamoto S."/>
            <person name="Okitani R."/>
            <person name="Kawakami T."/>
            <person name="Noguchi S."/>
            <person name="Itoh T."/>
            <person name="Shigeta K."/>
            <person name="Senba T."/>
            <person name="Matsumura K."/>
            <person name="Nakajima Y."/>
            <person name="Mizuno T."/>
            <person name="Morinaga M."/>
            <person name="Sasaki M."/>
            <person name="Togashi T."/>
            <person name="Oyama M."/>
            <person name="Hata H."/>
            <person name="Watanabe M."/>
            <person name="Komatsu T."/>
            <person name="Mizushima-Sugano J."/>
            <person name="Satoh T."/>
            <person name="Shirai Y."/>
            <person name="Takahashi Y."/>
            <person name="Nakagawa K."/>
            <person name="Okumura K."/>
            <person name="Nagase T."/>
            <person name="Nomura N."/>
            <person name="Kikuchi H."/>
            <person name="Masuho Y."/>
            <person name="Yamashita R."/>
            <person name="Nakai K."/>
            <person name="Yada T."/>
            <person name="Nakamura Y."/>
            <person name="Ohara O."/>
            <person name="Isogai T."/>
            <person name="Sugano S."/>
        </authorList>
    </citation>
    <scope>NUCLEOTIDE SEQUENCE [LARGE SCALE MRNA] (ISOFORMS 2 AND 3)</scope>
    <source>
        <tissue>Brain</tissue>
    </source>
</reference>
<reference key="3">
    <citation type="journal article" date="2008" name="DNA Res.">
        <title>Exploration of human ORFeome: high-throughput preparation of ORF clones and efficient characterization of their protein products.</title>
        <authorList>
            <person name="Nagase T."/>
            <person name="Yamakawa H."/>
            <person name="Tadokoro S."/>
            <person name="Nakajima D."/>
            <person name="Inoue S."/>
            <person name="Yamaguchi K."/>
            <person name="Itokawa Y."/>
            <person name="Kikuno R.F."/>
            <person name="Koga H."/>
            <person name="Ohara O."/>
        </authorList>
    </citation>
    <scope>NUCLEOTIDE SEQUENCE [LARGE SCALE MRNA] (ISOFORM 4)</scope>
</reference>
<reference key="4">
    <citation type="journal article" date="2006" name="Nature">
        <title>The DNA sequence, annotation and analysis of human chromosome 3.</title>
        <authorList>
            <person name="Muzny D.M."/>
            <person name="Scherer S.E."/>
            <person name="Kaul R."/>
            <person name="Wang J."/>
            <person name="Yu J."/>
            <person name="Sudbrak R."/>
            <person name="Buhay C.J."/>
            <person name="Chen R."/>
            <person name="Cree A."/>
            <person name="Ding Y."/>
            <person name="Dugan-Rocha S."/>
            <person name="Gill R."/>
            <person name="Gunaratne P."/>
            <person name="Harris R.A."/>
            <person name="Hawes A.C."/>
            <person name="Hernandez J."/>
            <person name="Hodgson A.V."/>
            <person name="Hume J."/>
            <person name="Jackson A."/>
            <person name="Khan Z.M."/>
            <person name="Kovar-Smith C."/>
            <person name="Lewis L.R."/>
            <person name="Lozado R.J."/>
            <person name="Metzker M.L."/>
            <person name="Milosavljevic A."/>
            <person name="Miner G.R."/>
            <person name="Morgan M.B."/>
            <person name="Nazareth L.V."/>
            <person name="Scott G."/>
            <person name="Sodergren E."/>
            <person name="Song X.-Z."/>
            <person name="Steffen D."/>
            <person name="Wei S."/>
            <person name="Wheeler D.A."/>
            <person name="Wright M.W."/>
            <person name="Worley K.C."/>
            <person name="Yuan Y."/>
            <person name="Zhang Z."/>
            <person name="Adams C.Q."/>
            <person name="Ansari-Lari M.A."/>
            <person name="Ayele M."/>
            <person name="Brown M.J."/>
            <person name="Chen G."/>
            <person name="Chen Z."/>
            <person name="Clendenning J."/>
            <person name="Clerc-Blankenburg K.P."/>
            <person name="Chen R."/>
            <person name="Chen Z."/>
            <person name="Davis C."/>
            <person name="Delgado O."/>
            <person name="Dinh H.H."/>
            <person name="Dong W."/>
            <person name="Draper H."/>
            <person name="Ernst S."/>
            <person name="Fu G."/>
            <person name="Gonzalez-Garay M.L."/>
            <person name="Garcia D.K."/>
            <person name="Gillett W."/>
            <person name="Gu J."/>
            <person name="Hao B."/>
            <person name="Haugen E."/>
            <person name="Havlak P."/>
            <person name="He X."/>
            <person name="Hennig S."/>
            <person name="Hu S."/>
            <person name="Huang W."/>
            <person name="Jackson L.R."/>
            <person name="Jacob L.S."/>
            <person name="Kelly S.H."/>
            <person name="Kube M."/>
            <person name="Levy R."/>
            <person name="Li Z."/>
            <person name="Liu B."/>
            <person name="Liu J."/>
            <person name="Liu W."/>
            <person name="Lu J."/>
            <person name="Maheshwari M."/>
            <person name="Nguyen B.-V."/>
            <person name="Okwuonu G.O."/>
            <person name="Palmeiri A."/>
            <person name="Pasternak S."/>
            <person name="Perez L.M."/>
            <person name="Phelps K.A."/>
            <person name="Plopper F.J."/>
            <person name="Qiang B."/>
            <person name="Raymond C."/>
            <person name="Rodriguez R."/>
            <person name="Saenphimmachak C."/>
            <person name="Santibanez J."/>
            <person name="Shen H."/>
            <person name="Shen Y."/>
            <person name="Subramanian S."/>
            <person name="Tabor P.E."/>
            <person name="Verduzco D."/>
            <person name="Waldron L."/>
            <person name="Wang J."/>
            <person name="Wang J."/>
            <person name="Wang Q."/>
            <person name="Williams G.A."/>
            <person name="Wong G.K.-S."/>
            <person name="Yao Z."/>
            <person name="Zhang J."/>
            <person name="Zhang X."/>
            <person name="Zhao G."/>
            <person name="Zhou J."/>
            <person name="Zhou Y."/>
            <person name="Nelson D."/>
            <person name="Lehrach H."/>
            <person name="Reinhardt R."/>
            <person name="Naylor S.L."/>
            <person name="Yang H."/>
            <person name="Olson M."/>
            <person name="Weinstock G."/>
            <person name="Gibbs R.A."/>
        </authorList>
    </citation>
    <scope>NUCLEOTIDE SEQUENCE [LARGE SCALE GENOMIC DNA]</scope>
</reference>
<reference key="5">
    <citation type="submission" date="2005-07" db="EMBL/GenBank/DDBJ databases">
        <authorList>
            <person name="Mural R.J."/>
            <person name="Istrail S."/>
            <person name="Sutton G.G."/>
            <person name="Florea L."/>
            <person name="Halpern A.L."/>
            <person name="Mobarry C.M."/>
            <person name="Lippert R."/>
            <person name="Walenz B."/>
            <person name="Shatkay H."/>
            <person name="Dew I."/>
            <person name="Miller J.R."/>
            <person name="Flanigan M.J."/>
            <person name="Edwards N.J."/>
            <person name="Bolanos R."/>
            <person name="Fasulo D."/>
            <person name="Halldorsson B.V."/>
            <person name="Hannenhalli S."/>
            <person name="Turner R."/>
            <person name="Yooseph S."/>
            <person name="Lu F."/>
            <person name="Nusskern D.R."/>
            <person name="Shue B.C."/>
            <person name="Zheng X.H."/>
            <person name="Zhong F."/>
            <person name="Delcher A.L."/>
            <person name="Huson D.H."/>
            <person name="Kravitz S.A."/>
            <person name="Mouchard L."/>
            <person name="Reinert K."/>
            <person name="Remington K.A."/>
            <person name="Clark A.G."/>
            <person name="Waterman M.S."/>
            <person name="Eichler E.E."/>
            <person name="Adams M.D."/>
            <person name="Hunkapiller M.W."/>
            <person name="Myers E.W."/>
            <person name="Venter J.C."/>
        </authorList>
    </citation>
    <scope>NUCLEOTIDE SEQUENCE [LARGE SCALE GENOMIC DNA]</scope>
</reference>
<reference key="6">
    <citation type="journal article" date="1999" name="Genomics">
        <title>Identification, mapping and phylogenomic analysis of four new human members of the T-box gene family: EOMES, TBX6, TBX18, and TBX19.</title>
        <authorList>
            <person name="Yi C.-H."/>
            <person name="Terrett J.A."/>
            <person name="Li Q.-Y."/>
            <person name="Ellington K."/>
            <person name="Packham E.A."/>
            <person name="Amstrong-Buisseret L."/>
            <person name="McClure P."/>
            <person name="Slingsby T."/>
            <person name="Brook J.D."/>
        </authorList>
    </citation>
    <scope>NUCLEOTIDE SEQUENCE [GENOMIC DNA] OF 291-455 (ISOFORM 1)</scope>
</reference>
<reference key="7">
    <citation type="journal article" date="2004" name="Genome Res.">
        <title>The status, quality, and expansion of the NIH full-length cDNA project: the Mammalian Gene Collection (MGC).</title>
        <authorList>
            <consortium name="The MGC Project Team"/>
        </authorList>
    </citation>
    <scope>NUCLEOTIDE SEQUENCE [LARGE SCALE MRNA] OF 297-686 (ISOFORM 1)</scope>
    <source>
        <tissue>Brain</tissue>
    </source>
</reference>
<reference key="8">
    <citation type="journal article" date="2007" name="Gut">
        <title>The T-box transcription factor eomesodermin controls CD8 T cell activity and lymph node metastasis in human colorectal cancer.</title>
        <authorList>
            <person name="Atreya I."/>
            <person name="Schimanski C.C."/>
            <person name="Becker C."/>
            <person name="Wirtz S."/>
            <person name="Dornhoff H."/>
            <person name="Schnuerer E."/>
            <person name="Berger M.R."/>
            <person name="Galle P.R."/>
            <person name="Herr W."/>
            <person name="Neurath M.F."/>
        </authorList>
    </citation>
    <scope>FUNCTION</scope>
    <scope>TISSUE SPECIFICITY</scope>
    <scope>INDUCTION</scope>
</reference>
<reference key="9">
    <citation type="journal article" date="2007" name="Nat. Genet.">
        <title>Homozygous silencing of T-box transcription factor EOMES leads to microcephaly with polymicrogyria and corpus callosum agenesis.</title>
        <authorList>
            <person name="Baala L."/>
            <person name="Briault S."/>
            <person name="Etchevers H.C."/>
            <person name="Laumonnier F."/>
            <person name="Natiq A."/>
            <person name="Amiel J."/>
            <person name="Boddaert N."/>
            <person name="Picard C."/>
            <person name="Sbiti A."/>
            <person name="Asermouh A."/>
            <person name="Attie-Bitach T."/>
            <person name="Encha-Razavi F."/>
            <person name="Munnich A."/>
            <person name="Sefiani A."/>
            <person name="Lyonnet S."/>
        </authorList>
    </citation>
    <scope>FUNCTION IN BRAIN DEVELOPMENT</scope>
    <scope>DEVELOPMENTAL STAGE</scope>
</reference>
<reference key="10">
    <citation type="journal article" date="2009" name="Sci. Signal.">
        <title>Quantitative phosphoproteomic analysis of T cell receptor signaling reveals system-wide modulation of protein-protein interactions.</title>
        <authorList>
            <person name="Mayya V."/>
            <person name="Lundgren D.H."/>
            <person name="Hwang S.-I."/>
            <person name="Rezaul K."/>
            <person name="Wu L."/>
            <person name="Eng J.K."/>
            <person name="Rodionov V."/>
            <person name="Han D.K."/>
        </authorList>
    </citation>
    <scope>IDENTIFICATION BY MASS SPECTROMETRY [LARGE SCALE ANALYSIS]</scope>
    <source>
        <tissue>Leukemic T-cell</tissue>
    </source>
</reference>
<reference key="11">
    <citation type="journal article" date="2020" name="Front. Neurosci.">
        <title>Unipolar (Dendritic) Brush Cells Are Morphologically Complex and Require Tbr2 for Differentiation and Migration.</title>
        <authorList>
            <person name="McDonough A."/>
            <person name="Elsen G.E."/>
            <person name="Daza R.M."/>
            <person name="Bachleda A.R."/>
            <person name="Pizzo D."/>
            <person name="DelleTorri O.M."/>
            <person name="Hevner R.F."/>
        </authorList>
    </citation>
    <scope>FUNCTION</scope>
</reference>
<reference key="12">
    <citation type="journal article" date="2006" name="Science">
        <title>The consensus coding sequences of human breast and colorectal cancers.</title>
        <authorList>
            <person name="Sjoeblom T."/>
            <person name="Jones S."/>
            <person name="Wood L.D."/>
            <person name="Parsons D.W."/>
            <person name="Lin J."/>
            <person name="Barber T.D."/>
            <person name="Mandelker D."/>
            <person name="Leary R.J."/>
            <person name="Ptak J."/>
            <person name="Silliman N."/>
            <person name="Szabo S."/>
            <person name="Buckhaults P."/>
            <person name="Farrell C."/>
            <person name="Meeh P."/>
            <person name="Markowitz S.D."/>
            <person name="Willis J."/>
            <person name="Dawson D."/>
            <person name="Willson J.K.V."/>
            <person name="Gazdar A.F."/>
            <person name="Hartigan J."/>
            <person name="Wu L."/>
            <person name="Liu C."/>
            <person name="Parmigiani G."/>
            <person name="Park B.H."/>
            <person name="Bachman K.E."/>
            <person name="Papadopoulos N."/>
            <person name="Vogelstein B."/>
            <person name="Kinzler K.W."/>
            <person name="Velculescu V.E."/>
        </authorList>
    </citation>
    <scope>VARIANT [LARGE SCALE ANALYSIS] GLN-667</scope>
</reference>
<organism>
    <name type="scientific">Homo sapiens</name>
    <name type="common">Human</name>
    <dbReference type="NCBI Taxonomy" id="9606"/>
    <lineage>
        <taxon>Eukaryota</taxon>
        <taxon>Metazoa</taxon>
        <taxon>Chordata</taxon>
        <taxon>Craniata</taxon>
        <taxon>Vertebrata</taxon>
        <taxon>Euteleostomi</taxon>
        <taxon>Mammalia</taxon>
        <taxon>Eutheria</taxon>
        <taxon>Euarchontoglires</taxon>
        <taxon>Primates</taxon>
        <taxon>Haplorrhini</taxon>
        <taxon>Catarrhini</taxon>
        <taxon>Hominidae</taxon>
        <taxon>Homo</taxon>
    </lineage>
</organism>
<protein>
    <recommendedName>
        <fullName>Eomesodermin homolog</fullName>
    </recommendedName>
    <alternativeName>
        <fullName>T-box brain protein 2</fullName>
        <shortName>T-brain-2</shortName>
        <shortName>TBR-2</shortName>
    </alternativeName>
</protein>
<comment type="function">
    <text evidence="6 7 8">Functions as a transcriptional activator playing a crucial role during development. Functions in trophoblast differentiation and later in gastrulation, regulating both mesoderm delamination and endoderm specification. Plays a role in brain development being required for the specification and the proliferation of the intermediate progenitor cells and their progeny in the cerebral cortex (PubMed:17353897). Required for differentiation and migration of unipolar dendritic brush cells (PubMed:33488348). Also involved in the differentiation of CD8+ T-cells during immune response regulating the expression of lytic effector genes (PubMed:17566017).</text>
</comment>
<comment type="interaction">
    <interactant intactId="EBI-19949518">
        <id>O95936-4</id>
    </interactant>
    <interactant intactId="EBI-12865884">
        <id>Q5XKR4</id>
        <label>OTP</label>
    </interactant>
    <organismsDiffer>false</organismsDiffer>
    <experiments>3</experiments>
</comment>
<comment type="subcellular location">
    <subcellularLocation>
        <location evidence="11">Nucleus</location>
    </subcellularLocation>
</comment>
<comment type="alternative products">
    <event type="alternative splicing"/>
    <isoform>
        <id>O95936-1</id>
        <name>1</name>
        <sequence type="displayed"/>
    </isoform>
    <isoform>
        <id>O95936-2</id>
        <name>2</name>
        <sequence type="described" ref="VSP_042161 VSP_042162"/>
    </isoform>
    <isoform>
        <id>O95936-3</id>
        <name>3</name>
        <sequence type="described" ref="VSP_054801 VSP_042162"/>
    </isoform>
    <isoform>
        <id>O95936-4</id>
        <name>4</name>
        <sequence type="described" ref="VSP_042162"/>
    </isoform>
</comment>
<comment type="tissue specificity">
    <text evidence="7">Expressed in CD8+ T-cells.</text>
</comment>
<comment type="developmental stage">
    <text evidence="6">Detected at 7 weeks of development in the forebrain floorplate of the CNS. Expressed within the mantle layer and migrating neuroblasts of the telencephalon at 12.5 weeks of development.</text>
</comment>
<comment type="induction">
    <text evidence="7">Up-regulated in CD8+ T-cells simultaneously stimulated with TGFB1 and IL4/interleukin-4.</text>
</comment>
<comment type="disease">
    <text>A translocation t(3;10)(p24;q23) located 215 kb 3' to the EOMES gene but leading to loss of its expression was identified in a large consanguineous family. Homozygous silencing produces microcephaly associated with corpus callosum agenesis, bilateral polymicrogyria, ventricular dilatation and a small cerebellum.</text>
</comment>
<comment type="miscellaneous">
    <molecule>Isoform 2</molecule>
    <text evidence="11">Dubious isoform produced through aberrant splice sites.</text>
</comment>
<evidence type="ECO:0000250" key="1"/>
<evidence type="ECO:0000250" key="2">
    <source>
        <dbReference type="UniProtKB" id="O54839"/>
    </source>
</evidence>
<evidence type="ECO:0000255" key="3">
    <source>
        <dbReference type="PROSITE-ProRule" id="PRU00201"/>
    </source>
</evidence>
<evidence type="ECO:0000256" key="4">
    <source>
        <dbReference type="SAM" id="MobiDB-lite"/>
    </source>
</evidence>
<evidence type="ECO:0000269" key="5">
    <source>
    </source>
</evidence>
<evidence type="ECO:0000269" key="6">
    <source>
    </source>
</evidence>
<evidence type="ECO:0000269" key="7">
    <source>
    </source>
</evidence>
<evidence type="ECO:0000269" key="8">
    <source>
    </source>
</evidence>
<evidence type="ECO:0000303" key="9">
    <source>
    </source>
</evidence>
<evidence type="ECO:0000303" key="10">
    <source>
    </source>
</evidence>
<evidence type="ECO:0000305" key="11"/>
<keyword id="KW-0010">Activator</keyword>
<keyword id="KW-1064">Adaptive immunity</keyword>
<keyword id="KW-0025">Alternative splicing</keyword>
<keyword id="KW-0160">Chromosomal rearrangement</keyword>
<keyword id="KW-0217">Developmental protein</keyword>
<keyword id="KW-0221">Differentiation</keyword>
<keyword id="KW-0238">DNA-binding</keyword>
<keyword id="KW-0306">Gastrulation</keyword>
<keyword id="KW-0391">Immunity</keyword>
<keyword id="KW-0539">Nucleus</keyword>
<keyword id="KW-0597">Phosphoprotein</keyword>
<keyword id="KW-1267">Proteomics identification</keyword>
<keyword id="KW-1185">Reference proteome</keyword>
<keyword id="KW-0804">Transcription</keyword>
<keyword id="KW-0805">Transcription regulation</keyword>
<gene>
    <name type="primary">EOMES</name>
    <name type="synonym">TBR2</name>
</gene>
<feature type="chain" id="PRO_0000184459" description="Eomesodermin homolog">
    <location>
        <begin position="1"/>
        <end position="686"/>
    </location>
</feature>
<feature type="DNA-binding region" description="T-box" evidence="3">
    <location>
        <begin position="276"/>
        <end position="456"/>
    </location>
</feature>
<feature type="region of interest" description="Disordered" evidence="4">
    <location>
        <begin position="27"/>
        <end position="46"/>
    </location>
</feature>
<feature type="region of interest" description="Required for transcription activation" evidence="1">
    <location>
        <begin position="571"/>
        <end position="686"/>
    </location>
</feature>
<feature type="region of interest" description="Disordered" evidence="4">
    <location>
        <begin position="639"/>
        <end position="686"/>
    </location>
</feature>
<feature type="compositionally biased region" description="Low complexity" evidence="4">
    <location>
        <begin position="34"/>
        <end position="43"/>
    </location>
</feature>
<feature type="compositionally biased region" description="Low complexity" evidence="4">
    <location>
        <begin position="646"/>
        <end position="657"/>
    </location>
</feature>
<feature type="compositionally biased region" description="Basic and acidic residues" evidence="4">
    <location>
        <begin position="659"/>
        <end position="673"/>
    </location>
</feature>
<feature type="modified residue" description="Phosphoserine" evidence="2">
    <location>
        <position position="107"/>
    </location>
</feature>
<feature type="splice variant" id="VSP_054801" description="In isoform 3." evidence="9">
    <location>
        <begin position="1"/>
        <end position="295"/>
    </location>
</feature>
<feature type="splice variant" id="VSP_042161" description="In isoform 2." evidence="9">
    <location>
        <begin position="1"/>
        <end position="286"/>
    </location>
</feature>
<feature type="splice variant" id="VSP_042162" description="In isoform 2, isoform 3 and isoform 4." evidence="9 10">
    <original>S</original>
    <variation>SMYTASENDRLTPSPTDSPR</variation>
    <location>
        <position position="460"/>
    </location>
</feature>
<feature type="sequence variant" id="VAR_059827" description="In dbSNP:rs1874198.">
    <original>A</original>
    <variation>G</variation>
    <location>
        <position position="120"/>
    </location>
</feature>
<feature type="sequence variant" id="VAR_036069" description="In a breast cancer sample; somatic mutation." evidence="5">
    <original>E</original>
    <variation>Q</variation>
    <location>
        <position position="667"/>
    </location>
</feature>
<feature type="sequence conflict" description="In Ref. 1; BAA83417." evidence="11" ref="1">
    <original>D</original>
    <variation>G</variation>
    <location>
        <position position="49"/>
    </location>
</feature>
<feature type="sequence conflict" description="In Ref. 1; BAA83417." evidence="11" ref="1">
    <original>E</original>
    <variation>V</variation>
    <location>
        <position position="142"/>
    </location>
</feature>
<feature type="sequence conflict" description="In Ref. 1; BAA83417." evidence="11" ref="1">
    <original>V</original>
    <variation>A</variation>
    <location>
        <position position="200"/>
    </location>
</feature>
<feature type="sequence conflict" description="In Ref. 1; BAA83417." evidence="11" ref="1">
    <original>SS</original>
    <variation>IN</variation>
    <location>
        <begin position="221"/>
        <end position="222"/>
    </location>
</feature>
<feature type="sequence conflict" description="In Ref. 1; BAA83417." evidence="11" ref="1">
    <original>G</original>
    <variation>S</variation>
    <location>
        <position position="262"/>
    </location>
</feature>
<feature type="sequence conflict" description="In Ref. 6; CAB37939." evidence="11" ref="6">
    <original>C</original>
    <variation>S</variation>
    <location>
        <position position="337"/>
    </location>
</feature>
<feature type="sequence conflict" description="In Ref. 6; CAB37939." evidence="11" ref="6">
    <original>E</original>
    <variation>EK</variation>
    <location>
        <position position="411"/>
    </location>
</feature>
<feature type="sequence conflict" description="In Ref. 6; CAB37939." evidence="11" ref="6">
    <original>E</original>
    <variation>D</variation>
    <location>
        <position position="415"/>
    </location>
</feature>
<feature type="sequence conflict" description="In Ref. 1; BAA83417." evidence="11" ref="1">
    <original>E</original>
    <variation>G</variation>
    <location>
        <position position="661"/>
    </location>
</feature>
<feature type="sequence conflict" description="In Ref. 1; BAA83417." evidence="11" ref="1">
    <original>T</original>
    <variation>S</variation>
    <location>
        <position position="685"/>
    </location>
</feature>
<proteinExistence type="evidence at protein level"/>